<comment type="function">
    <text evidence="1">N-acetylglucosaminyltransferase involved in the Golgi-specific modification of N-linked glycans.</text>
</comment>
<comment type="subcellular location">
    <subcellularLocation>
        <location evidence="1">Golgi apparatus membrane</location>
        <topology evidence="1">Single-pass type II membrane protein</topology>
    </subcellularLocation>
    <subcellularLocation>
        <location evidence="1">Vacuole membrane</location>
        <topology evidence="1">Single-pass type II membrane protein</topology>
    </subcellularLocation>
</comment>
<comment type="similarity">
    <text evidence="3">Belongs to the GNT1 family.</text>
</comment>
<organism>
    <name type="scientific">Kluyveromyces lactis (strain ATCC 8585 / CBS 2359 / DSM 70799 / NBRC 1267 / NRRL Y-1140 / WM37)</name>
    <name type="common">Yeast</name>
    <name type="synonym">Candida sphaerica</name>
    <dbReference type="NCBI Taxonomy" id="284590"/>
    <lineage>
        <taxon>Eukaryota</taxon>
        <taxon>Fungi</taxon>
        <taxon>Dikarya</taxon>
        <taxon>Ascomycota</taxon>
        <taxon>Saccharomycotina</taxon>
        <taxon>Saccharomycetes</taxon>
        <taxon>Saccharomycetales</taxon>
        <taxon>Saccharomycetaceae</taxon>
        <taxon>Kluyveromyces</taxon>
    </lineage>
</organism>
<protein>
    <recommendedName>
        <fullName>Glucose N-acetyltransferase 1-B</fullName>
        <ecNumber>2.4.1.-</ecNumber>
    </recommendedName>
    <alternativeName>
        <fullName>N-acetylglucosaminyltransferase B</fullName>
    </alternativeName>
</protein>
<evidence type="ECO:0000250" key="1"/>
<evidence type="ECO:0000255" key="2"/>
<evidence type="ECO:0000305" key="3"/>
<name>GNT1B_KLULA</name>
<gene>
    <name type="primary">GNT1-B</name>
    <name type="ordered locus">KLLA0C14366g</name>
</gene>
<sequence length="453" mass="53508">MLKRKVRYLLLIVVVFTGIILSVEAIMRFQLNKNVDYYLKFFDKHKDNIENMYDPLNIKQIPYSTIDQLYTKRQSEAEPIDWDKFAYVNYITDFEYLCNTLIQFRKLNDSGSKAKLLALVTDTLVNKSKENKEVEALLNKIKSVSDRVAVTEVGSVIQPNDHTPWSKSLTKLAIFNLTDYERIIYMDNDAIIHDKMDELFFLPSYVKFAAPISYWFVTADDLRTVSTDTKKLFKTNKLDPIEKKLASRVKNSLEIYNHLPNLPQHFYSKSMNFIIDIDGFQKSDNKVNFATHLMVIKPDVTMANDIRDNILPRYLKAKEEYDTDLINEELYNFKELIYYQFKIFRKIQYLFKPSVLILPYTKYGLLTKSIDDKRQKDLLKNAILGYERKEKDDLIQDAKFIHFSDYPLSKPWFYSNADDIQCSKKYSISDENCQLWKSLYKEYLESRAICQVN</sequence>
<keyword id="KW-0325">Glycoprotein</keyword>
<keyword id="KW-0333">Golgi apparatus</keyword>
<keyword id="KW-0472">Membrane</keyword>
<keyword id="KW-1185">Reference proteome</keyword>
<keyword id="KW-0735">Signal-anchor</keyword>
<keyword id="KW-0808">Transferase</keyword>
<keyword id="KW-0812">Transmembrane</keyword>
<keyword id="KW-1133">Transmembrane helix</keyword>
<keyword id="KW-0926">Vacuole</keyword>
<feature type="chain" id="PRO_0000087530" description="Glucose N-acetyltransferase 1-B">
    <location>
        <begin position="1"/>
        <end position="453"/>
    </location>
</feature>
<feature type="topological domain" description="Cytoplasmic" evidence="2">
    <location>
        <begin position="1"/>
        <end position="8"/>
    </location>
</feature>
<feature type="transmembrane region" description="Helical; Signal-anchor for type II membrane protein" evidence="2">
    <location>
        <begin position="9"/>
        <end position="29"/>
    </location>
</feature>
<feature type="topological domain" description="Lumenal" evidence="2">
    <location>
        <begin position="30"/>
        <end position="453"/>
    </location>
</feature>
<feature type="short sequence motif" description="DXD">
    <location>
        <begin position="187"/>
        <end position="189"/>
    </location>
</feature>
<feature type="glycosylation site" description="N-linked (GlcNAc...) asparagine" evidence="2">
    <location>
        <position position="108"/>
    </location>
</feature>
<feature type="glycosylation site" description="N-linked (GlcNAc...) asparagine" evidence="2">
    <location>
        <position position="126"/>
    </location>
</feature>
<feature type="glycosylation site" description="N-linked (GlcNAc...) asparagine" evidence="2">
    <location>
        <position position="176"/>
    </location>
</feature>
<dbReference type="EC" id="2.4.1.-"/>
<dbReference type="EMBL" id="CR382123">
    <property type="protein sequence ID" value="CAH01694.1"/>
    <property type="molecule type" value="Genomic_DNA"/>
</dbReference>
<dbReference type="RefSeq" id="XP_452843.1">
    <property type="nucleotide sequence ID" value="XM_452843.1"/>
</dbReference>
<dbReference type="FunCoup" id="Q6CT96">
    <property type="interactions" value="24"/>
</dbReference>
<dbReference type="STRING" id="284590.Q6CT96"/>
<dbReference type="CAZy" id="GT8">
    <property type="family name" value="Glycosyltransferase Family 8"/>
</dbReference>
<dbReference type="GlyCosmos" id="Q6CT96">
    <property type="glycosylation" value="3 sites, No reported glycans"/>
</dbReference>
<dbReference type="PaxDb" id="284590-Q6CT96"/>
<dbReference type="KEGG" id="kla:KLLA0_C14366g"/>
<dbReference type="eggNOG" id="KOG1950">
    <property type="taxonomic scope" value="Eukaryota"/>
</dbReference>
<dbReference type="HOGENOM" id="CLU_034860_1_0_1"/>
<dbReference type="InParanoid" id="Q6CT96"/>
<dbReference type="OMA" id="ILPHRVY"/>
<dbReference type="Proteomes" id="UP000000598">
    <property type="component" value="Chromosome C"/>
</dbReference>
<dbReference type="GO" id="GO:0000139">
    <property type="term" value="C:Golgi membrane"/>
    <property type="evidence" value="ECO:0007669"/>
    <property type="project" value="UniProtKB-SubCell"/>
</dbReference>
<dbReference type="GO" id="GO:0005774">
    <property type="term" value="C:vacuolar membrane"/>
    <property type="evidence" value="ECO:0007669"/>
    <property type="project" value="UniProtKB-SubCell"/>
</dbReference>
<dbReference type="GO" id="GO:0016740">
    <property type="term" value="F:transferase activity"/>
    <property type="evidence" value="ECO:0007669"/>
    <property type="project" value="UniProtKB-KW"/>
</dbReference>
<dbReference type="Gene3D" id="3.90.550.10">
    <property type="entry name" value="Spore Coat Polysaccharide Biosynthesis Protein SpsA, Chain A"/>
    <property type="match status" value="1"/>
</dbReference>
<dbReference type="InterPro" id="IPR050587">
    <property type="entry name" value="GNT1/Glycosyltrans_8"/>
</dbReference>
<dbReference type="InterPro" id="IPR029044">
    <property type="entry name" value="Nucleotide-diphossugar_trans"/>
</dbReference>
<dbReference type="PANTHER" id="PTHR11183">
    <property type="entry name" value="GLYCOGENIN SUBFAMILY MEMBER"/>
    <property type="match status" value="1"/>
</dbReference>
<dbReference type="SUPFAM" id="SSF53448">
    <property type="entry name" value="Nucleotide-diphospho-sugar transferases"/>
    <property type="match status" value="1"/>
</dbReference>
<proteinExistence type="inferred from homology"/>
<accession>Q6CT96</accession>
<reference key="1">
    <citation type="journal article" date="2004" name="Nature">
        <title>Genome evolution in yeasts.</title>
        <authorList>
            <person name="Dujon B."/>
            <person name="Sherman D."/>
            <person name="Fischer G."/>
            <person name="Durrens P."/>
            <person name="Casaregola S."/>
            <person name="Lafontaine I."/>
            <person name="de Montigny J."/>
            <person name="Marck C."/>
            <person name="Neuveglise C."/>
            <person name="Talla E."/>
            <person name="Goffard N."/>
            <person name="Frangeul L."/>
            <person name="Aigle M."/>
            <person name="Anthouard V."/>
            <person name="Babour A."/>
            <person name="Barbe V."/>
            <person name="Barnay S."/>
            <person name="Blanchin S."/>
            <person name="Beckerich J.-M."/>
            <person name="Beyne E."/>
            <person name="Bleykasten C."/>
            <person name="Boisrame A."/>
            <person name="Boyer J."/>
            <person name="Cattolico L."/>
            <person name="Confanioleri F."/>
            <person name="de Daruvar A."/>
            <person name="Despons L."/>
            <person name="Fabre E."/>
            <person name="Fairhead C."/>
            <person name="Ferry-Dumazet H."/>
            <person name="Groppi A."/>
            <person name="Hantraye F."/>
            <person name="Hennequin C."/>
            <person name="Jauniaux N."/>
            <person name="Joyet P."/>
            <person name="Kachouri R."/>
            <person name="Kerrest A."/>
            <person name="Koszul R."/>
            <person name="Lemaire M."/>
            <person name="Lesur I."/>
            <person name="Ma L."/>
            <person name="Muller H."/>
            <person name="Nicaud J.-M."/>
            <person name="Nikolski M."/>
            <person name="Oztas S."/>
            <person name="Ozier-Kalogeropoulos O."/>
            <person name="Pellenz S."/>
            <person name="Potier S."/>
            <person name="Richard G.-F."/>
            <person name="Straub M.-L."/>
            <person name="Suleau A."/>
            <person name="Swennen D."/>
            <person name="Tekaia F."/>
            <person name="Wesolowski-Louvel M."/>
            <person name="Westhof E."/>
            <person name="Wirth B."/>
            <person name="Zeniou-Meyer M."/>
            <person name="Zivanovic Y."/>
            <person name="Bolotin-Fukuhara M."/>
            <person name="Thierry A."/>
            <person name="Bouchier C."/>
            <person name="Caudron B."/>
            <person name="Scarpelli C."/>
            <person name="Gaillardin C."/>
            <person name="Weissenbach J."/>
            <person name="Wincker P."/>
            <person name="Souciet J.-L."/>
        </authorList>
    </citation>
    <scope>NUCLEOTIDE SEQUENCE [LARGE SCALE GENOMIC DNA]</scope>
    <source>
        <strain>ATCC 8585 / CBS 2359 / DSM 70799 / NBRC 1267 / NRRL Y-1140 / WM37</strain>
    </source>
</reference>